<dbReference type="EC" id="3.4.22.40"/>
<dbReference type="EMBL" id="AE005176">
    <property type="protein sequence ID" value="AAK05976.1"/>
    <property type="molecule type" value="Genomic_DNA"/>
</dbReference>
<dbReference type="PIR" id="F86859">
    <property type="entry name" value="F86859"/>
</dbReference>
<dbReference type="RefSeq" id="NP_268035.1">
    <property type="nucleotide sequence ID" value="NC_002662.1"/>
</dbReference>
<dbReference type="RefSeq" id="WP_010906180.1">
    <property type="nucleotide sequence ID" value="NC_002662.1"/>
</dbReference>
<dbReference type="SMR" id="Q9CEG3"/>
<dbReference type="MEROPS" id="C01.086"/>
<dbReference type="PaxDb" id="272623-L130687"/>
<dbReference type="EnsemblBacteria" id="AAK05976">
    <property type="protein sequence ID" value="AAK05976"/>
    <property type="gene ID" value="L130687"/>
</dbReference>
<dbReference type="KEGG" id="lla:L130687"/>
<dbReference type="PATRIC" id="fig|272623.7.peg.2012"/>
<dbReference type="eggNOG" id="COG3579">
    <property type="taxonomic scope" value="Bacteria"/>
</dbReference>
<dbReference type="HOGENOM" id="CLU_038600_0_1_9"/>
<dbReference type="OrthoDB" id="1111399at2"/>
<dbReference type="Proteomes" id="UP000002196">
    <property type="component" value="Chromosome"/>
</dbReference>
<dbReference type="GO" id="GO:0005737">
    <property type="term" value="C:cytoplasm"/>
    <property type="evidence" value="ECO:0007669"/>
    <property type="project" value="TreeGrafter"/>
</dbReference>
<dbReference type="GO" id="GO:0070005">
    <property type="term" value="F:cysteine-type aminopeptidase activity"/>
    <property type="evidence" value="ECO:0007669"/>
    <property type="project" value="InterPro"/>
</dbReference>
<dbReference type="GO" id="GO:0004197">
    <property type="term" value="F:cysteine-type endopeptidase activity"/>
    <property type="evidence" value="ECO:0007669"/>
    <property type="project" value="UniProtKB-EC"/>
</dbReference>
<dbReference type="GO" id="GO:0043418">
    <property type="term" value="P:homocysteine catabolic process"/>
    <property type="evidence" value="ECO:0007669"/>
    <property type="project" value="TreeGrafter"/>
</dbReference>
<dbReference type="GO" id="GO:0006508">
    <property type="term" value="P:proteolysis"/>
    <property type="evidence" value="ECO:0007669"/>
    <property type="project" value="UniProtKB-KW"/>
</dbReference>
<dbReference type="GO" id="GO:0009636">
    <property type="term" value="P:response to toxic substance"/>
    <property type="evidence" value="ECO:0007669"/>
    <property type="project" value="TreeGrafter"/>
</dbReference>
<dbReference type="CDD" id="cd00585">
    <property type="entry name" value="Peptidase_C1B"/>
    <property type="match status" value="1"/>
</dbReference>
<dbReference type="Gene3D" id="3.90.70.10">
    <property type="entry name" value="Cysteine proteinases"/>
    <property type="match status" value="1"/>
</dbReference>
<dbReference type="InterPro" id="IPR038765">
    <property type="entry name" value="Papain-like_cys_pep_sf"/>
</dbReference>
<dbReference type="InterPro" id="IPR000169">
    <property type="entry name" value="Pept_cys_AS"/>
</dbReference>
<dbReference type="InterPro" id="IPR025660">
    <property type="entry name" value="Pept_his_AS"/>
</dbReference>
<dbReference type="InterPro" id="IPR004134">
    <property type="entry name" value="Peptidase_C1B"/>
</dbReference>
<dbReference type="PANTHER" id="PTHR10363">
    <property type="entry name" value="BLEOMYCIN HYDROLASE"/>
    <property type="match status" value="1"/>
</dbReference>
<dbReference type="PANTHER" id="PTHR10363:SF2">
    <property type="entry name" value="BLEOMYCIN HYDROLASE"/>
    <property type="match status" value="1"/>
</dbReference>
<dbReference type="Pfam" id="PF03051">
    <property type="entry name" value="Peptidase_C1_2"/>
    <property type="match status" value="1"/>
</dbReference>
<dbReference type="PIRSF" id="PIRSF005700">
    <property type="entry name" value="PepC"/>
    <property type="match status" value="1"/>
</dbReference>
<dbReference type="SUPFAM" id="SSF54001">
    <property type="entry name" value="Cysteine proteinases"/>
    <property type="match status" value="1"/>
</dbReference>
<dbReference type="PROSITE" id="PS00139">
    <property type="entry name" value="THIOL_PROTEASE_CYS"/>
    <property type="match status" value="1"/>
</dbReference>
<dbReference type="PROSITE" id="PS00639">
    <property type="entry name" value="THIOL_PROTEASE_HIS"/>
    <property type="match status" value="1"/>
</dbReference>
<keyword id="KW-0031">Aminopeptidase</keyword>
<keyword id="KW-0378">Hydrolase</keyword>
<keyword id="KW-0645">Protease</keyword>
<keyword id="KW-1185">Reference proteome</keyword>
<keyword id="KW-0788">Thiol protease</keyword>
<name>PEPC_LACLA</name>
<protein>
    <recommendedName>
        <fullName>Aminopeptidase C</fullName>
        <ecNumber>3.4.22.40</ecNumber>
    </recommendedName>
    <alternativeName>
        <fullName>Bleomycin hydrolase</fullName>
    </alternativeName>
</protein>
<gene>
    <name type="primary">pepC</name>
    <name type="ordered locus">LL1878</name>
    <name type="ORF">L130687</name>
</gene>
<evidence type="ECO:0000250" key="1"/>
<evidence type="ECO:0000255" key="2">
    <source>
        <dbReference type="PROSITE-ProRule" id="PRU10088"/>
    </source>
</evidence>
<evidence type="ECO:0000255" key="3">
    <source>
        <dbReference type="PROSITE-ProRule" id="PRU10089"/>
    </source>
</evidence>
<comment type="function">
    <text evidence="1">Hydrolyzes naphthylamide-substituted amino acids as well as di- and tripeptides in which the half-cystine residue is involved in a disulfide loop, notably in oxytocin and vasopressin. Also has a bleomycin hydrolase activity (By similarity).</text>
</comment>
<comment type="catalytic activity">
    <reaction>
        <text>Inactivates bleomycin B2 (a cytotoxic glycometallopeptide) by hydrolysis of a carboxyamide bond of beta-aminoalanine, but also shows general aminopeptidase activity. The specificity varies somewhat with source, but amino acid arylamides of Met, Leu and Ala are preferred.</text>
        <dbReference type="EC" id="3.4.22.40"/>
    </reaction>
</comment>
<comment type="subunit">
    <text evidence="1">Homohexamer.</text>
</comment>
<comment type="similarity">
    <text evidence="2 3">Belongs to the peptidase C1 family.</text>
</comment>
<organism>
    <name type="scientific">Lactococcus lactis subsp. lactis (strain IL1403)</name>
    <name type="common">Streptococcus lactis</name>
    <dbReference type="NCBI Taxonomy" id="272623"/>
    <lineage>
        <taxon>Bacteria</taxon>
        <taxon>Bacillati</taxon>
        <taxon>Bacillota</taxon>
        <taxon>Bacilli</taxon>
        <taxon>Lactobacillales</taxon>
        <taxon>Streptococcaceae</taxon>
        <taxon>Lactococcus</taxon>
    </lineage>
</organism>
<proteinExistence type="inferred from homology"/>
<feature type="initiator methionine" description="Removed" evidence="1">
    <location>
        <position position="1"/>
    </location>
</feature>
<feature type="chain" id="PRO_0000050592" description="Aminopeptidase C">
    <location>
        <begin position="2"/>
        <end position="436"/>
    </location>
</feature>
<feature type="active site" evidence="1">
    <location>
        <position position="68"/>
    </location>
</feature>
<feature type="active site" evidence="1">
    <location>
        <position position="356"/>
    </location>
</feature>
<feature type="active site" evidence="1">
    <location>
        <position position="378"/>
    </location>
</feature>
<accession>Q9CEG3</accession>
<sequence>MTVTSDFTQKLYENFAENTKLRAVENAVTKNGLLSSLEVRGSHAANLPEFSIDLTKDPVTNQKQSGRCWMFAALNTFRHKFINEFKTEDFEFSQAYTFFWDKYEKSNWFMEQIIGDIEMDDRRLKFLLQTPQQDGGQWDMMVAIFEKYGIVPKAVYPESQASSSSRELNQYLNKLLRQDAEILRYTIEQGGDVEAVKEELLQEVFNFLAVTLGLPPQNFEFAFRNKDNEYKKFVGSPKEFYNEYVGIDLNNYVSVINAPTADKPYNKSYTVEFLGNVVGGKEVKHLNVEMDRFKKLAIAQMQAGETVWFGCDVGQESNRSAGLLTMDSYDFKSSLDIEFTQSKAGRLDYGESLMTHAMVLAGVDLDADGNSTKWKVENSWGKDAGQKGYFVASDEWMDEYTYQIVVRKDLLTEEELAAYEEKPQVLLPWDPMGALA</sequence>
<reference key="1">
    <citation type="journal article" date="2001" name="Genome Res.">
        <title>The complete genome sequence of the lactic acid bacterium Lactococcus lactis ssp. lactis IL1403.</title>
        <authorList>
            <person name="Bolotin A."/>
            <person name="Wincker P."/>
            <person name="Mauger S."/>
            <person name="Jaillon O."/>
            <person name="Malarme K."/>
            <person name="Weissenbach J."/>
            <person name="Ehrlich S.D."/>
            <person name="Sorokin A."/>
        </authorList>
    </citation>
    <scope>NUCLEOTIDE SEQUENCE [LARGE SCALE GENOMIC DNA]</scope>
    <source>
        <strain>IL1403</strain>
    </source>
</reference>